<comment type="function">
    <text evidence="4">Probable neurotoxin with unknown target. Possibly targets ion channels.</text>
</comment>
<comment type="subcellular location">
    <subcellularLocation>
        <location evidence="5">Secreted</location>
    </subcellularLocation>
</comment>
<comment type="tissue specificity">
    <text evidence="5">Expressed by the venom duct.</text>
</comment>
<comment type="domain">
    <text>The cysteine framework is IX (C-C-C-C-C-C).</text>
</comment>
<proteinExistence type="inferred from homology"/>
<reference key="1">
    <citation type="journal article" date="2011" name="Toxicon">
        <title>Diversity of conotoxin types from Conus californicus reflects a diversity of prey types and a novel evolutionary history.</title>
        <authorList>
            <person name="Elliger C.A."/>
            <person name="Richmond T.A."/>
            <person name="Lebaric Z.N."/>
            <person name="Pierce N.T."/>
            <person name="Sweedler J.V."/>
            <person name="Gilly W.F."/>
        </authorList>
    </citation>
    <scope>NUCLEOTIDE SEQUENCE [MRNA]</scope>
    <source>
        <tissue>Venom duct</tissue>
    </source>
</reference>
<evidence type="ECO:0000250" key="1"/>
<evidence type="ECO:0000255" key="2"/>
<evidence type="ECO:0000303" key="3">
    <source>
    </source>
</evidence>
<evidence type="ECO:0000305" key="4"/>
<evidence type="ECO:0000305" key="5">
    <source>
    </source>
</evidence>
<accession>D2Y3T3</accession>
<keyword id="KW-1015">Disulfide bond</keyword>
<keyword id="KW-0872">Ion channel impairing toxin</keyword>
<keyword id="KW-0528">Neurotoxin</keyword>
<keyword id="KW-0964">Secreted</keyword>
<keyword id="KW-0732">Signal</keyword>
<keyword id="KW-0800">Toxin</keyword>
<name>CU92A_CONCL</name>
<organism>
    <name type="scientific">Californiconus californicus</name>
    <name type="common">California cone</name>
    <name type="synonym">Conus californicus</name>
    <dbReference type="NCBI Taxonomy" id="1736779"/>
    <lineage>
        <taxon>Eukaryota</taxon>
        <taxon>Metazoa</taxon>
        <taxon>Spiralia</taxon>
        <taxon>Lophotrochozoa</taxon>
        <taxon>Mollusca</taxon>
        <taxon>Gastropoda</taxon>
        <taxon>Caenogastropoda</taxon>
        <taxon>Neogastropoda</taxon>
        <taxon>Conoidea</taxon>
        <taxon>Conidae</taxon>
        <taxon>Californiconus</taxon>
    </lineage>
</organism>
<dbReference type="EMBL" id="GU299515">
    <property type="protein sequence ID" value="ADB65790.1"/>
    <property type="molecule type" value="mRNA"/>
</dbReference>
<dbReference type="ConoServer" id="3989">
    <property type="toxin name" value="Cal9.2a precursor"/>
</dbReference>
<dbReference type="GO" id="GO:0005576">
    <property type="term" value="C:extracellular region"/>
    <property type="evidence" value="ECO:0007669"/>
    <property type="project" value="UniProtKB-SubCell"/>
</dbReference>
<dbReference type="GO" id="GO:0099106">
    <property type="term" value="F:ion channel regulator activity"/>
    <property type="evidence" value="ECO:0007669"/>
    <property type="project" value="UniProtKB-KW"/>
</dbReference>
<dbReference type="GO" id="GO:0090729">
    <property type="term" value="F:toxin activity"/>
    <property type="evidence" value="ECO:0007669"/>
    <property type="project" value="UniProtKB-KW"/>
</dbReference>
<feature type="signal peptide" evidence="2">
    <location>
        <begin position="1"/>
        <end position="23"/>
    </location>
</feature>
<feature type="propeptide" id="PRO_5000566299" evidence="5">
    <location>
        <begin position="24"/>
        <end position="33"/>
    </location>
</feature>
<feature type="peptide" id="PRO_5000570803" description="Conotoxin Cal9.2a" evidence="5">
    <location>
        <begin position="35"/>
        <end position="79"/>
    </location>
</feature>
<feature type="disulfide bond" evidence="1">
    <location>
        <begin position="41"/>
        <end position="58"/>
    </location>
</feature>
<feature type="disulfide bond" evidence="1">
    <location>
        <begin position="46"/>
        <end position="68"/>
    </location>
</feature>
<feature type="disulfide bond" evidence="1">
    <location>
        <begin position="48"/>
        <end position="73"/>
    </location>
</feature>
<protein>
    <recommendedName>
        <fullName evidence="3">Conotoxin Cal9.2a</fullName>
    </recommendedName>
</protein>
<sequence>MNCYLILTVALLLTSAMTGTTTAGQLNKKGVTLREDDGFPCNAGNCACLPLDSYSYTCQSPTSSTANCEGNECVSEADW</sequence>